<reference key="1">
    <citation type="journal article" date="1999" name="J. Virol.">
        <title>Human herpesvirus 6B genome sequence: coding content and comparison with human herpesvirus 6A.</title>
        <authorList>
            <person name="Dominguez G."/>
            <person name="Dambaugh T.R."/>
            <person name="Stamey F.R."/>
            <person name="Dewhurst S."/>
            <person name="Inoue N."/>
            <person name="Pellett P.E."/>
        </authorList>
    </citation>
    <scope>NUCLEOTIDE SEQUENCE [LARGE SCALE GENOMIC DNA]</scope>
</reference>
<comment type="function">
    <text evidence="1">Plays an essential role in cytoplasmic secondary envelopment during viral egress. Interacts with the capsid via the large tegument protein/LTP and participates in its transport to the host trans-Golgi network (TGN) where secondary envelopment occurs. Modulates tegumentation and capsid accumulation at the viral assembly complex.</text>
</comment>
<comment type="subunit">
    <text evidence="1">Interacts (via C-terminus) with the large tegument protein/LTP (via N-terminus).</text>
</comment>
<comment type="subcellular location">
    <subcellularLocation>
        <location evidence="1">Virion tegument</location>
    </subcellularLocation>
    <subcellularLocation>
        <location evidence="1">Host cytoplasm</location>
    </subcellularLocation>
    <subcellularLocation>
        <location evidence="1">Host nucleus</location>
    </subcellularLocation>
    <subcellularLocation>
        <location evidence="1">Host Golgi apparatus</location>
        <location evidence="1">Host trans-Golgi network</location>
    </subcellularLocation>
</comment>
<comment type="similarity">
    <text evidence="1">Belongs to the herpesviridae inner tegument protein family.</text>
</comment>
<keyword id="KW-1035">Host cytoplasm</keyword>
<keyword id="KW-1040">Host Golgi apparatus</keyword>
<keyword id="KW-1048">Host nucleus</keyword>
<keyword id="KW-1185">Reference proteome</keyword>
<keyword id="KW-0946">Virion</keyword>
<keyword id="KW-0920">Virion tegument</keyword>
<evidence type="ECO:0000255" key="1">
    <source>
        <dbReference type="HAMAP-Rule" id="MF_04043"/>
    </source>
</evidence>
<name>ITP_HHV6Z</name>
<feature type="chain" id="PRO_0000408445" description="Inner tegument protein">
    <location>
        <begin position="1"/>
        <end position="1082"/>
    </location>
</feature>
<feature type="region of interest" description="Interaction with large tegument protein" evidence="1">
    <location>
        <begin position="604"/>
        <end position="1082"/>
    </location>
</feature>
<organismHost>
    <name type="scientific">Homo sapiens</name>
    <name type="common">Human</name>
    <dbReference type="NCBI Taxonomy" id="9606"/>
</organismHost>
<gene>
    <name type="primary">U30</name>
</gene>
<sequence>MTHDNRQLLPQETKLVTPNKDTLSSRYLHVLIIDNTLSTIEFVYMVVKAVLTQADTLKAFEQRKNRPTNRILGLSTSVSKRYINIPKFSSSGANNSQGVKTLAAIRKFSLPDKNCFRNFLSFSTTLFKVPASIDIYFLFFTASTVSTMAARALDLEFILSSLKNSTSPESLLAATAKIEILSLAADSVTHNRVIAFINRLPPKKYHFDLIREYTVFYFLNSTTLTSENKLLSAELLHEELSQIRSSSSPGTELENLNNAEVLYVFDRILNSIKMLKNELSSPIGKLRVQPAANDPGTDKTIKYSKIQSIIQKVHSFTRENSLLANCRAVVELIDDLYRKLYSWFLHILTFEDIQFPGDTFLDRLLKMDYCFTYYPSSNRHLIDLFEKTLDNQTSTDIDKFFDTSGNSPELLYQKTFSLKIFSKNLTAQDNGLYIYPLLKTDLSILDFLGTENILFHRGLIYHILHQKTIPQERENDLNKINQFFATVIQQVIETRSSCLPASLSRLLDTIFHFNRIGLNIETCRIYVEILSNHMATPDTQPIINTFTINLIHIVFTAHVFFICMENFSPTFLFYNRKKLILEQQRAILIIERNEYSTLWKQISDHIDCLFNISLSESFFKEYTKGGNEEHKQFLYKNLFEKWGDVFFPFTYSVTTSKNSTAHHITTLELRAICKEVYQSDSPEAYESLLPYSTHPAFKTLFIKIYVIPMVTYITNLTFDKLQSDYRLITLIHACKLLLPSQHLLLHYMVWLYAFSINVDHIDLGTFTVIKSVIFKIADHINVMTHTIYSPETNLLVSILLNAYTDYLQKYVNPWIKQTITANFSLLQTYITFTKQCASILATKCNINLDNLFISMTIGTDKIVTTSFCSFIATCRNLVRQHEEFKKSLKTIETSKTTLTNMLLNIITSVSSSKELLTNEALQKFIDTVQRISQHVNETYQLISVNLEKCKISNDILIESLKKTISIVDVLSSDAILNTSLTSRCLEAATLAVSNNSFTILEIKKDAVAVFKPFITQLFESMKPTTSLYKKLMATQKLTTDRIPFLDIFDDRYNLVRHVERQLNWYAAYAEAAQQDLIAPLTF</sequence>
<dbReference type="EMBL" id="AF157706">
    <property type="protein sequence ID" value="AAD49644.1"/>
    <property type="molecule type" value="Genomic_DNA"/>
</dbReference>
<dbReference type="RefSeq" id="NP_050211.1">
    <property type="nucleotide sequence ID" value="NC_000898.1"/>
</dbReference>
<dbReference type="SMR" id="Q9QJ38"/>
<dbReference type="GeneID" id="1497032"/>
<dbReference type="KEGG" id="vg:1497032"/>
<dbReference type="Proteomes" id="UP000006930">
    <property type="component" value="Segment"/>
</dbReference>
<dbReference type="GO" id="GO:0044177">
    <property type="term" value="C:host cell Golgi apparatus"/>
    <property type="evidence" value="ECO:0007669"/>
    <property type="project" value="UniProtKB-SubCell"/>
</dbReference>
<dbReference type="GO" id="GO:0042025">
    <property type="term" value="C:host cell nucleus"/>
    <property type="evidence" value="ECO:0007669"/>
    <property type="project" value="UniProtKB-SubCell"/>
</dbReference>
<dbReference type="GO" id="GO:0019033">
    <property type="term" value="C:viral tegument"/>
    <property type="evidence" value="ECO:0007669"/>
    <property type="project" value="UniProtKB-SubCell"/>
</dbReference>
<dbReference type="GO" id="GO:0019068">
    <property type="term" value="P:virion assembly"/>
    <property type="evidence" value="ECO:0007669"/>
    <property type="project" value="InterPro"/>
</dbReference>
<dbReference type="HAMAP" id="MF_04043">
    <property type="entry name" value="HSV_ITP"/>
    <property type="match status" value="1"/>
</dbReference>
<dbReference type="InterPro" id="IPR007611">
    <property type="entry name" value="Herpes_U30"/>
</dbReference>
<dbReference type="InterPro" id="IPR034738">
    <property type="entry name" value="HSV_ITP"/>
</dbReference>
<dbReference type="Pfam" id="PF04523">
    <property type="entry name" value="Herpes_U30"/>
    <property type="match status" value="1"/>
</dbReference>
<protein>
    <recommendedName>
        <fullName evidence="1">Inner tegument protein</fullName>
    </recommendedName>
</protein>
<accession>Q9QJ38</accession>
<proteinExistence type="inferred from homology"/>
<organism>
    <name type="scientific">Human herpesvirus 6B (strain Z29)</name>
    <name type="common">HHV-6 variant B</name>
    <name type="synonym">Human B lymphotropic virus</name>
    <dbReference type="NCBI Taxonomy" id="36351"/>
    <lineage>
        <taxon>Viruses</taxon>
        <taxon>Duplodnaviria</taxon>
        <taxon>Heunggongvirae</taxon>
        <taxon>Peploviricota</taxon>
        <taxon>Herviviricetes</taxon>
        <taxon>Herpesvirales</taxon>
        <taxon>Orthoherpesviridae</taxon>
        <taxon>Betaherpesvirinae</taxon>
        <taxon>Roseolovirus</taxon>
        <taxon>Roseolovirus humanbeta6b</taxon>
        <taxon>Human herpesvirus 6B</taxon>
    </lineage>
</organism>